<gene>
    <name evidence="1" type="primary">pgi</name>
    <name type="ordered locus">BF3604</name>
</gene>
<accession>Q5L9E3</accession>
<evidence type="ECO:0000255" key="1">
    <source>
        <dbReference type="HAMAP-Rule" id="MF_00473"/>
    </source>
</evidence>
<proteinExistence type="inferred from homology"/>
<dbReference type="EC" id="5.3.1.9" evidence="1"/>
<dbReference type="EMBL" id="CR626927">
    <property type="protein sequence ID" value="CAH09285.1"/>
    <property type="molecule type" value="Genomic_DNA"/>
</dbReference>
<dbReference type="RefSeq" id="WP_005790898.1">
    <property type="nucleotide sequence ID" value="NZ_UFTH01000001.1"/>
</dbReference>
<dbReference type="SMR" id="Q5L9E3"/>
<dbReference type="PaxDb" id="272559-BF9343_3504"/>
<dbReference type="KEGG" id="bfs:BF9343_3504"/>
<dbReference type="eggNOG" id="COG0166">
    <property type="taxonomic scope" value="Bacteria"/>
</dbReference>
<dbReference type="HOGENOM" id="CLU_037303_0_1_10"/>
<dbReference type="UniPathway" id="UPA00109">
    <property type="reaction ID" value="UER00181"/>
</dbReference>
<dbReference type="UniPathway" id="UPA00138"/>
<dbReference type="Proteomes" id="UP000006731">
    <property type="component" value="Chromosome"/>
</dbReference>
<dbReference type="GO" id="GO:0005829">
    <property type="term" value="C:cytosol"/>
    <property type="evidence" value="ECO:0007669"/>
    <property type="project" value="TreeGrafter"/>
</dbReference>
<dbReference type="GO" id="GO:0097367">
    <property type="term" value="F:carbohydrate derivative binding"/>
    <property type="evidence" value="ECO:0007669"/>
    <property type="project" value="InterPro"/>
</dbReference>
<dbReference type="GO" id="GO:0004347">
    <property type="term" value="F:glucose-6-phosphate isomerase activity"/>
    <property type="evidence" value="ECO:0007669"/>
    <property type="project" value="UniProtKB-UniRule"/>
</dbReference>
<dbReference type="GO" id="GO:0048029">
    <property type="term" value="F:monosaccharide binding"/>
    <property type="evidence" value="ECO:0007669"/>
    <property type="project" value="TreeGrafter"/>
</dbReference>
<dbReference type="GO" id="GO:0006094">
    <property type="term" value="P:gluconeogenesis"/>
    <property type="evidence" value="ECO:0007669"/>
    <property type="project" value="UniProtKB-UniRule"/>
</dbReference>
<dbReference type="GO" id="GO:0051156">
    <property type="term" value="P:glucose 6-phosphate metabolic process"/>
    <property type="evidence" value="ECO:0007669"/>
    <property type="project" value="TreeGrafter"/>
</dbReference>
<dbReference type="GO" id="GO:0006096">
    <property type="term" value="P:glycolytic process"/>
    <property type="evidence" value="ECO:0007669"/>
    <property type="project" value="UniProtKB-UniRule"/>
</dbReference>
<dbReference type="CDD" id="cd05015">
    <property type="entry name" value="SIS_PGI_1"/>
    <property type="match status" value="1"/>
</dbReference>
<dbReference type="CDD" id="cd05016">
    <property type="entry name" value="SIS_PGI_2"/>
    <property type="match status" value="1"/>
</dbReference>
<dbReference type="FunFam" id="3.40.50.10490:FF:000015">
    <property type="entry name" value="Glucose-6-phosphate isomerase"/>
    <property type="match status" value="1"/>
</dbReference>
<dbReference type="FunFam" id="3.40.50.10490:FF:000016">
    <property type="entry name" value="Glucose-6-phosphate isomerase"/>
    <property type="match status" value="1"/>
</dbReference>
<dbReference type="Gene3D" id="3.40.50.10490">
    <property type="entry name" value="Glucose-6-phosphate isomerase like protein, domain 1"/>
    <property type="match status" value="2"/>
</dbReference>
<dbReference type="HAMAP" id="MF_00473">
    <property type="entry name" value="G6P_isomerase"/>
    <property type="match status" value="1"/>
</dbReference>
<dbReference type="InterPro" id="IPR001672">
    <property type="entry name" value="G6P_Isomerase"/>
</dbReference>
<dbReference type="InterPro" id="IPR018189">
    <property type="entry name" value="Phosphoglucose_isomerase_CS"/>
</dbReference>
<dbReference type="InterPro" id="IPR046348">
    <property type="entry name" value="SIS_dom_sf"/>
</dbReference>
<dbReference type="InterPro" id="IPR035476">
    <property type="entry name" value="SIS_PGI_1"/>
</dbReference>
<dbReference type="InterPro" id="IPR035482">
    <property type="entry name" value="SIS_PGI_2"/>
</dbReference>
<dbReference type="NCBIfam" id="NF010697">
    <property type="entry name" value="PRK14097.1"/>
    <property type="match status" value="1"/>
</dbReference>
<dbReference type="PANTHER" id="PTHR11469">
    <property type="entry name" value="GLUCOSE-6-PHOSPHATE ISOMERASE"/>
    <property type="match status" value="1"/>
</dbReference>
<dbReference type="PANTHER" id="PTHR11469:SF1">
    <property type="entry name" value="GLUCOSE-6-PHOSPHATE ISOMERASE"/>
    <property type="match status" value="1"/>
</dbReference>
<dbReference type="Pfam" id="PF00342">
    <property type="entry name" value="PGI"/>
    <property type="match status" value="1"/>
</dbReference>
<dbReference type="PRINTS" id="PR00662">
    <property type="entry name" value="G6PISOMERASE"/>
</dbReference>
<dbReference type="SUPFAM" id="SSF53697">
    <property type="entry name" value="SIS domain"/>
    <property type="match status" value="1"/>
</dbReference>
<dbReference type="PROSITE" id="PS00765">
    <property type="entry name" value="P_GLUCOSE_ISOMERASE_1"/>
    <property type="match status" value="1"/>
</dbReference>
<dbReference type="PROSITE" id="PS00174">
    <property type="entry name" value="P_GLUCOSE_ISOMERASE_2"/>
    <property type="match status" value="1"/>
</dbReference>
<dbReference type="PROSITE" id="PS51463">
    <property type="entry name" value="P_GLUCOSE_ISOMERASE_3"/>
    <property type="match status" value="1"/>
</dbReference>
<keyword id="KW-0963">Cytoplasm</keyword>
<keyword id="KW-0312">Gluconeogenesis</keyword>
<keyword id="KW-0324">Glycolysis</keyword>
<keyword id="KW-0413">Isomerase</keyword>
<feature type="chain" id="PRO_0000180596" description="Glucose-6-phosphate isomerase">
    <location>
        <begin position="1"/>
        <end position="445"/>
    </location>
</feature>
<feature type="active site" description="Proton donor" evidence="1">
    <location>
        <position position="287"/>
    </location>
</feature>
<feature type="active site" evidence="1">
    <location>
        <position position="308"/>
    </location>
</feature>
<feature type="active site" evidence="1">
    <location>
        <position position="422"/>
    </location>
</feature>
<sequence length="445" mass="48750">MISLNIEKTFGFISKESVSAYEAQVKAAQEALENGTGKGNDFLGWLHLPSSISKEHLADLKATAQVLRDNCEVVIVAGIGGSYLGARAVIEALSNSFTWLQEKKTAPVMIYAGHNIGEDYLYELTEFLKDKKFGVINISKSGTTTETALAFRLLKKQCEDQRGKEMAKKVIVAVTDAKKGAARVTADKEGYKSFIIPDNVGGRFSVLTPVGLLPIAVAGFDIEQLVNGAADMEKACGADVPFAENPAAIYAATRNELYKNGKKIEILVNFCPKLHYVSEWWKQLYGESEGKDNKGIFPAAVDFSTDLHSMGQWIQEGERTIFETVISVDKVNHKLEVPSDEANLDGLNFLAGKRVDEVNKMAELGTQLAHVDGGVPNMRIVIPELSEFSIGQLLYFFEKACGISGYLLGVNPFNQPGVEAYKKNMFALLNKPGYEEESKAIQARL</sequence>
<name>G6PI_BACFN</name>
<comment type="function">
    <text evidence="1">Catalyzes the reversible isomerization of glucose-6-phosphate to fructose-6-phosphate.</text>
</comment>
<comment type="catalytic activity">
    <reaction evidence="1">
        <text>alpha-D-glucose 6-phosphate = beta-D-fructose 6-phosphate</text>
        <dbReference type="Rhea" id="RHEA:11816"/>
        <dbReference type="ChEBI" id="CHEBI:57634"/>
        <dbReference type="ChEBI" id="CHEBI:58225"/>
        <dbReference type="EC" id="5.3.1.9"/>
    </reaction>
</comment>
<comment type="pathway">
    <text evidence="1">Carbohydrate biosynthesis; gluconeogenesis.</text>
</comment>
<comment type="pathway">
    <text evidence="1">Carbohydrate degradation; glycolysis; D-glyceraldehyde 3-phosphate and glycerone phosphate from D-glucose: step 2/4.</text>
</comment>
<comment type="subcellular location">
    <subcellularLocation>
        <location evidence="1">Cytoplasm</location>
    </subcellularLocation>
</comment>
<comment type="similarity">
    <text evidence="1">Belongs to the GPI family.</text>
</comment>
<organism>
    <name type="scientific">Bacteroides fragilis (strain ATCC 25285 / DSM 2151 / CCUG 4856 / JCM 11019 / LMG 10263 / NCTC 9343 / Onslow / VPI 2553 / EN-2)</name>
    <dbReference type="NCBI Taxonomy" id="272559"/>
    <lineage>
        <taxon>Bacteria</taxon>
        <taxon>Pseudomonadati</taxon>
        <taxon>Bacteroidota</taxon>
        <taxon>Bacteroidia</taxon>
        <taxon>Bacteroidales</taxon>
        <taxon>Bacteroidaceae</taxon>
        <taxon>Bacteroides</taxon>
    </lineage>
</organism>
<reference key="1">
    <citation type="journal article" date="2005" name="Science">
        <title>Extensive DNA inversions in the B. fragilis genome control variable gene expression.</title>
        <authorList>
            <person name="Cerdeno-Tarraga A.-M."/>
            <person name="Patrick S."/>
            <person name="Crossman L.C."/>
            <person name="Blakely G."/>
            <person name="Abratt V."/>
            <person name="Lennard N."/>
            <person name="Poxton I."/>
            <person name="Duerden B."/>
            <person name="Harris B."/>
            <person name="Quail M.A."/>
            <person name="Barron A."/>
            <person name="Clark L."/>
            <person name="Corton C."/>
            <person name="Doggett J."/>
            <person name="Holden M.T.G."/>
            <person name="Larke N."/>
            <person name="Line A."/>
            <person name="Lord A."/>
            <person name="Norbertczak H."/>
            <person name="Ormond D."/>
            <person name="Price C."/>
            <person name="Rabbinowitsch E."/>
            <person name="Woodward J."/>
            <person name="Barrell B.G."/>
            <person name="Parkhill J."/>
        </authorList>
    </citation>
    <scope>NUCLEOTIDE SEQUENCE [LARGE SCALE GENOMIC DNA]</scope>
    <source>
        <strain>ATCC 25285 / DSM 2151 / CCUG 4856 / JCM 11019 / LMG 10263 / NCTC 9343 / Onslow / VPI 2553 / EN-2</strain>
    </source>
</reference>
<protein>
    <recommendedName>
        <fullName evidence="1">Glucose-6-phosphate isomerase</fullName>
        <shortName evidence="1">GPI</shortName>
        <ecNumber evidence="1">5.3.1.9</ecNumber>
    </recommendedName>
    <alternativeName>
        <fullName evidence="1">Phosphoglucose isomerase</fullName>
        <shortName evidence="1">PGI</shortName>
    </alternativeName>
    <alternativeName>
        <fullName evidence="1">Phosphohexose isomerase</fullName>
        <shortName evidence="1">PHI</shortName>
    </alternativeName>
</protein>